<protein>
    <recommendedName>
        <fullName evidence="1">Protein Vpu</fullName>
    </recommendedName>
    <alternativeName>
        <fullName evidence="1">U ORF protein</fullName>
    </alternativeName>
    <alternativeName>
        <fullName evidence="1">Viral protein U</fullName>
    </alternativeName>
</protein>
<proteinExistence type="inferred from homology"/>
<name>VPU_HV1J3</name>
<feature type="chain" id="PRO_0000085424" description="Protein Vpu">
    <location>
        <begin position="1"/>
        <end position="80"/>
    </location>
</feature>
<feature type="topological domain" description="Extracellular" evidence="1">
    <location>
        <begin position="1"/>
        <end position="6"/>
    </location>
</feature>
<feature type="transmembrane region" description="Helical" evidence="1">
    <location>
        <begin position="7"/>
        <end position="27"/>
    </location>
</feature>
<feature type="topological domain" description="Cytoplasmic" evidence="1">
    <location>
        <begin position="28"/>
        <end position="80"/>
    </location>
</feature>
<feature type="region of interest" description="Disordered" evidence="2">
    <location>
        <begin position="49"/>
        <end position="80"/>
    </location>
</feature>
<feature type="compositionally biased region" description="Acidic residues" evidence="2">
    <location>
        <begin position="52"/>
        <end position="62"/>
    </location>
</feature>
<feature type="modified residue" description="Phosphoserine; by host CK2" evidence="1">
    <location>
        <position position="52"/>
    </location>
</feature>
<feature type="modified residue" description="Phosphoserine; by host CK2" evidence="1">
    <location>
        <position position="56"/>
    </location>
</feature>
<organism>
    <name type="scientific">Human immunodeficiency virus type 1 group M subtype B (isolate JH32)</name>
    <name type="common">HIV-1</name>
    <dbReference type="NCBI Taxonomy" id="11694"/>
    <lineage>
        <taxon>Viruses</taxon>
        <taxon>Riboviria</taxon>
        <taxon>Pararnavirae</taxon>
        <taxon>Artverviricota</taxon>
        <taxon>Revtraviricetes</taxon>
        <taxon>Ortervirales</taxon>
        <taxon>Retroviridae</taxon>
        <taxon>Orthoretrovirinae</taxon>
        <taxon>Lentivirus</taxon>
        <taxon>Human immunodeficiency virus type 1</taxon>
    </lineage>
</organism>
<accession>P12517</accession>
<organismHost>
    <name type="scientific">Homo sapiens</name>
    <name type="common">Human</name>
    <dbReference type="NCBI Taxonomy" id="9606"/>
</organismHost>
<comment type="function">
    <text evidence="1">Enhances virion budding by targeting host CD4 and Tetherin/BST2 to proteasome degradation. Degradation of CD4 prevents any unwanted premature interactions between viral Env and its host receptor CD4 in the endoplasmic reticulum. Degradation of antiretroviral protein Tetherin/BST2 is important for virion budding, as BST2 tethers new viral particles to the host cell membrane. Mechanistically, Vpu bridges either CD4 or BST2 to BTRC, a substrate recognition subunit of the Skp1/Cullin/F-box protein E3 ubiquitin ligase, induces their ubiquitination and subsequent proteasomal degradation. The alteration of the E3 ligase specificity by Vpu seems to promote the degradation of host IKBKB, leading to NF-kappa-B down-regulation and subsequent apoptosis. Acts as a viroporin that forms an oligomeric ion channel in membranes. Modulates the host DNA repair mechanisms to promote degradation of nuclear viral cDNA in cells that are already productively infected in order to suppress immune sensing and proviral hyper-integration (superinfection). Manipulates PML-NBs and modulates SUMOylation of host BLM protein thereby enhancing its DNA-end processing activity toward viral unintegrated linear DNA. Also inhibits RAD52-mediated homologous repair of viral cDNA, preventing the generation of dead-end circular forms of single copies of the long terminal repeat and permitting sustained nucleolytic attack.</text>
</comment>
<comment type="activity regulation">
    <text evidence="1">Ion channel activity is inhibited by hexamethylene amiloride in vitro.</text>
</comment>
<comment type="subunit">
    <text evidence="1">Homopentamer. Interacts with host CD4 and BRTC; these interactions induce proteasomal degradation of CD4. Interacts with host BST2; this interaction leads to the degradation of host BST2. Interacts with host FBXW11. Interacts with host AP1M1; this interaction plays a role in the mistrafficking and subsequent degradation of host BST2. Interacts with host RANBP2; this interaction allows Vpu to down-regulate host BLM sumoylation.</text>
</comment>
<comment type="subcellular location">
    <subcellularLocation>
        <location evidence="1">Host membrane</location>
        <topology evidence="1">Single-pass type I membrane protein</topology>
    </subcellularLocation>
</comment>
<comment type="domain">
    <text evidence="1">The N-terminus and transmembrane domains are required for self-oligomerization and proper virion budding, whereas the cytoplasmic domain is required for CD4 degradation. The cytoplasmic domain is composed of 2 amphipathic alpha helix that form a U-shape.</text>
</comment>
<comment type="PTM">
    <text evidence="1">Phosphorylated by host CK2. This phosphorylation is necessary for interaction with human BTRC and degradation of CD4.</text>
</comment>
<comment type="miscellaneous">
    <text evidence="1">HIV-1 lineages are divided in three main groups, M (for Major), O (for Outlier), and N (for New, or Non-M, Non-O). The vast majority of strains found worldwide belong to the group M. Group O seems to be endemic to and largely confined to Cameroon and neighboring countries in West Central Africa, where these viruses represent a small minority of HIV-1 strains. The group N is represented by a limited number of isolates from Cameroonian persons. The group M is further subdivided in 9 clades or subtypes (A to D, F to H, J and K).</text>
</comment>
<comment type="similarity">
    <text evidence="1">Belongs to the HIV-1 VPU protein family.</text>
</comment>
<gene>
    <name evidence="1" type="primary">vpu</name>
</gene>
<reference key="1">
    <citation type="journal article" date="1989" name="AIDS Res. Hum. Retroviruses">
        <title>Nucleotide sequences of gag and env genes of a Japanese isolate of HIV-1 and their expression in bacteria.</title>
        <authorList>
            <person name="Komiyama N."/>
            <person name="Hattori N."/>
            <person name="Inoue J."/>
            <person name="Sakuma S."/>
            <person name="Kurimura T."/>
            <person name="Yoshida M."/>
        </authorList>
    </citation>
    <scope>NUCLEOTIDE SEQUENCE [GENOMIC RNA]</scope>
</reference>
<keyword id="KW-0014">AIDS</keyword>
<keyword id="KW-0053">Apoptosis</keyword>
<keyword id="KW-1043">Host membrane</keyword>
<keyword id="KW-0945">Host-virus interaction</keyword>
<keyword id="KW-1090">Inhibition of host innate immune response by virus</keyword>
<keyword id="KW-1084">Inhibition of host tetherin by virus</keyword>
<keyword id="KW-0407">Ion channel</keyword>
<keyword id="KW-0406">Ion transport</keyword>
<keyword id="KW-0472">Membrane</keyword>
<keyword id="KW-0597">Phosphoprotein</keyword>
<keyword id="KW-0812">Transmembrane</keyword>
<keyword id="KW-1133">Transmembrane helix</keyword>
<keyword id="KW-0813">Transport</keyword>
<keyword id="KW-0899">Viral immunoevasion</keyword>
<evidence type="ECO:0000255" key="1">
    <source>
        <dbReference type="HAMAP-Rule" id="MF_04082"/>
    </source>
</evidence>
<evidence type="ECO:0000256" key="2">
    <source>
        <dbReference type="SAM" id="MobiDB-lite"/>
    </source>
</evidence>
<dbReference type="EMBL" id="M21138">
    <property type="status" value="NOT_ANNOTATED_CDS"/>
    <property type="molecule type" value="Genomic_RNA"/>
</dbReference>
<dbReference type="SMR" id="P12517"/>
<dbReference type="GO" id="GO:0033644">
    <property type="term" value="C:host cell membrane"/>
    <property type="evidence" value="ECO:0007669"/>
    <property type="project" value="UniProtKB-SubCell"/>
</dbReference>
<dbReference type="GO" id="GO:0016020">
    <property type="term" value="C:membrane"/>
    <property type="evidence" value="ECO:0007669"/>
    <property type="project" value="UniProtKB-UniRule"/>
</dbReference>
<dbReference type="GO" id="GO:0042609">
    <property type="term" value="F:CD4 receptor binding"/>
    <property type="evidence" value="ECO:0007669"/>
    <property type="project" value="UniProtKB-UniRule"/>
</dbReference>
<dbReference type="GO" id="GO:0005261">
    <property type="term" value="F:monoatomic cation channel activity"/>
    <property type="evidence" value="ECO:0007669"/>
    <property type="project" value="UniProtKB-UniRule"/>
</dbReference>
<dbReference type="GO" id="GO:0032801">
    <property type="term" value="P:receptor catabolic process"/>
    <property type="evidence" value="ECO:0007669"/>
    <property type="project" value="UniProtKB-UniRule"/>
</dbReference>
<dbReference type="GO" id="GO:0052170">
    <property type="term" value="P:symbiont-mediated suppression of host innate immune response"/>
    <property type="evidence" value="ECO:0007669"/>
    <property type="project" value="UniProtKB-KW"/>
</dbReference>
<dbReference type="GO" id="GO:0039502">
    <property type="term" value="P:symbiont-mediated suppression of host type I interferon-mediated signaling pathway"/>
    <property type="evidence" value="ECO:0007669"/>
    <property type="project" value="UniProtKB-UniRule"/>
</dbReference>
<dbReference type="GO" id="GO:0039587">
    <property type="term" value="P:symbiont-mediated-mediated suppression of host tetherin activity"/>
    <property type="evidence" value="ECO:0007669"/>
    <property type="project" value="UniProtKB-UniRule"/>
</dbReference>
<dbReference type="GO" id="GO:0019076">
    <property type="term" value="P:viral release from host cell"/>
    <property type="evidence" value="ECO:0007669"/>
    <property type="project" value="UniProtKB-UniRule"/>
</dbReference>
<dbReference type="Gene3D" id="1.10.195.10">
    <property type="entry name" value="HIV-1 VPU cytoplasmic domain"/>
    <property type="match status" value="1"/>
</dbReference>
<dbReference type="HAMAP" id="MF_04082">
    <property type="entry name" value="HIV_VPU"/>
    <property type="match status" value="1"/>
</dbReference>
<dbReference type="InterPro" id="IPR008187">
    <property type="entry name" value="Vpu"/>
</dbReference>
<dbReference type="InterPro" id="IPR009032">
    <property type="entry name" value="Vpu_cyt_dom_sf"/>
</dbReference>
<dbReference type="Pfam" id="PF00558">
    <property type="entry name" value="Vpu"/>
    <property type="match status" value="1"/>
</dbReference>
<dbReference type="SUPFAM" id="SSF57647">
    <property type="entry name" value="HIV-1 VPU cytoplasmic domain"/>
    <property type="match status" value="1"/>
</dbReference>
<sequence>MQSLIAAIVALVVVAIIAIVVWSIVFIEYRKILRQRKIDRLIDRIRERAEDSGNESEGDQEELSALVEMGHDAPWDIDDL</sequence>